<name>FLOT1_PIG</name>
<gene>
    <name type="primary">FLOT1</name>
</gene>
<feature type="chain" id="PRO_0000262590" description="Flotillin-1">
    <location>
        <begin position="1"/>
        <end position="427"/>
    </location>
</feature>
<feature type="modified residue" description="Phosphoserine" evidence="3">
    <location>
        <position position="19"/>
    </location>
</feature>
<feature type="modified residue" description="Phosphoserine" evidence="3">
    <location>
        <position position="163"/>
    </location>
</feature>
<feature type="modified residue" description="Phosphoserine" evidence="3">
    <location>
        <position position="385"/>
    </location>
</feature>
<feature type="modified residue" description="Phosphothreonine" evidence="3">
    <location>
        <position position="387"/>
    </location>
</feature>
<evidence type="ECO:0000250" key="1"/>
<evidence type="ECO:0000250" key="2">
    <source>
        <dbReference type="UniProtKB" id="O08917"/>
    </source>
</evidence>
<evidence type="ECO:0000250" key="3">
    <source>
        <dbReference type="UniProtKB" id="O75955"/>
    </source>
</evidence>
<evidence type="ECO:0000305" key="4"/>
<comment type="function">
    <text evidence="1">May act as a scaffolding protein within caveolar membranes, functionally participating in formation of caveolae or caveolae-like vesicles.</text>
</comment>
<comment type="subunit">
    <text evidence="1">Heterooligomeric complex of flotillin-1 and flotillin-2 and caveolin-1 and caveolin-2. Interacts with ECPAS.</text>
</comment>
<comment type="subcellular location">
    <subcellularLocation>
        <location evidence="3">Cell membrane</location>
        <topology evidence="3">Peripheral membrane protein</topology>
    </subcellularLocation>
    <subcellularLocation>
        <location evidence="3">Endosome</location>
    </subcellularLocation>
    <subcellularLocation>
        <location evidence="2">Membrane</location>
        <location evidence="2">Caveola</location>
        <topology evidence="2">Peripheral membrane protein</topology>
    </subcellularLocation>
    <subcellularLocation>
        <location evidence="3">Melanosome</location>
    </subcellularLocation>
    <subcellularLocation>
        <location evidence="3">Membrane raft</location>
    </subcellularLocation>
    <text evidence="2 3">Identified by mass spectrometry in melanosome fractions from stage I to stage IV. Membrane-associated protein of caveola.</text>
</comment>
<comment type="similarity">
    <text evidence="4">Belongs to the band 7/mec-2 family. Flotillin subfamily.</text>
</comment>
<organism>
    <name type="scientific">Sus scrofa</name>
    <name type="common">Pig</name>
    <dbReference type="NCBI Taxonomy" id="9823"/>
    <lineage>
        <taxon>Eukaryota</taxon>
        <taxon>Metazoa</taxon>
        <taxon>Chordata</taxon>
        <taxon>Craniata</taxon>
        <taxon>Vertebrata</taxon>
        <taxon>Euteleostomi</taxon>
        <taxon>Mammalia</taxon>
        <taxon>Eutheria</taxon>
        <taxon>Laurasiatheria</taxon>
        <taxon>Artiodactyla</taxon>
        <taxon>Suina</taxon>
        <taxon>Suidae</taxon>
        <taxon>Sus</taxon>
    </lineage>
</organism>
<keyword id="KW-1003">Cell membrane</keyword>
<keyword id="KW-0967">Endosome</keyword>
<keyword id="KW-0472">Membrane</keyword>
<keyword id="KW-0597">Phosphoprotein</keyword>
<keyword id="KW-1185">Reference proteome</keyword>
<protein>
    <recommendedName>
        <fullName>Flotillin-1</fullName>
    </recommendedName>
</protein>
<accession>Q767L6</accession>
<sequence length="427" mass="47355">MFFTCGPNEAMVVSGFCRSPPVMVAGGRVFVLPCIQQIQRISLNTLTLNVKSEKVYTRHGVPISVTGIAQVKIQGQNKEMLAAACQMFLGKTEAEIAHIALETLEGHQRAIMAHMTVEEIYKDRQKFSEQVFKVASSDLVNMGISVVSYTLKDIHDDQDYLHSLGKARTAQVQKDARIGEAEAKRDAGIREAKAKQEKVSAQYLSEIEMAKAQRDYELKKAAYDIEVNTRRAQADLAYQLQVAKTKQQIEEQRVQVQVVERAQQVAVQEQEIARREKELEARVRKPAEAERYKLERLAAAEKSQLIMQAEAEAESVRMRGEAEAFAIGARARAEAEQMAKKAEAFQLYQEAAQLDMLLEKLPQVAEEISGPLTSAKKITLVSSGSGTMGAAKVTGEVLDILSRLPESVERLTGVSISQVNHKPLRTA</sequence>
<proteinExistence type="inferred from homology"/>
<dbReference type="EMBL" id="AB113356">
    <property type="protein sequence ID" value="BAD08436.1"/>
    <property type="molecule type" value="Genomic_DNA"/>
</dbReference>
<dbReference type="RefSeq" id="NP_001121955.1">
    <property type="nucleotide sequence ID" value="NM_001128483.1"/>
</dbReference>
<dbReference type="RefSeq" id="XP_005665805.1">
    <property type="nucleotide sequence ID" value="XM_005665748.3"/>
</dbReference>
<dbReference type="SMR" id="Q767L6"/>
<dbReference type="FunCoup" id="Q767L6">
    <property type="interactions" value="765"/>
</dbReference>
<dbReference type="STRING" id="9823.ENSSSCP00000029813"/>
<dbReference type="PaxDb" id="9823-ENSSSCP00000023659"/>
<dbReference type="PeptideAtlas" id="Q767L6"/>
<dbReference type="Ensembl" id="ENSSSCT00000031243.6">
    <property type="protein sequence ID" value="ENSSSCP00000023659.4"/>
    <property type="gene ID" value="ENSSSCG00000022725.6"/>
</dbReference>
<dbReference type="Ensembl" id="ENSSSCT00000034277.5">
    <property type="protein sequence ID" value="ENSSSCP00000029813.2"/>
    <property type="gene ID" value="ENSSSCG00000022725.6"/>
</dbReference>
<dbReference type="Ensembl" id="ENSSSCT00000092795.2">
    <property type="protein sequence ID" value="ENSSSCP00000081126.2"/>
    <property type="gene ID" value="ENSSSCG00000022725.6"/>
</dbReference>
<dbReference type="Ensembl" id="ENSSSCT00015031734.1">
    <property type="protein sequence ID" value="ENSSSCP00015012571.1"/>
    <property type="gene ID" value="ENSSSCG00015023916.1"/>
</dbReference>
<dbReference type="Ensembl" id="ENSSSCT00025108273.1">
    <property type="protein sequence ID" value="ENSSSCP00025049018.1"/>
    <property type="gene ID" value="ENSSSCG00025077786.1"/>
</dbReference>
<dbReference type="Ensembl" id="ENSSSCT00030084621.1">
    <property type="protein sequence ID" value="ENSSSCP00030038944.1"/>
    <property type="gene ID" value="ENSSSCG00030060534.1"/>
</dbReference>
<dbReference type="Ensembl" id="ENSSSCT00035081545.1">
    <property type="protein sequence ID" value="ENSSSCP00035033751.1"/>
    <property type="gene ID" value="ENSSSCG00035060713.1"/>
</dbReference>
<dbReference type="Ensembl" id="ENSSSCT00040093557.1">
    <property type="protein sequence ID" value="ENSSSCP00040041333.1"/>
    <property type="gene ID" value="ENSSSCG00040068280.1"/>
</dbReference>
<dbReference type="Ensembl" id="ENSSSCT00045068175.1">
    <property type="protein sequence ID" value="ENSSSCP00045048481.1"/>
    <property type="gene ID" value="ENSSSCG00045039184.1"/>
</dbReference>
<dbReference type="Ensembl" id="ENSSSCT00050027910.1">
    <property type="protein sequence ID" value="ENSSSCP00050011541.1"/>
    <property type="gene ID" value="ENSSSCG00050020683.1"/>
</dbReference>
<dbReference type="Ensembl" id="ENSSSCT00055060699.1">
    <property type="protein sequence ID" value="ENSSSCP00055048637.1"/>
    <property type="gene ID" value="ENSSSCG00055030485.1"/>
</dbReference>
<dbReference type="Ensembl" id="ENSSSCT00060065762.1">
    <property type="protein sequence ID" value="ENSSSCP00060028151.1"/>
    <property type="gene ID" value="ENSSSCG00060048412.1"/>
</dbReference>
<dbReference type="Ensembl" id="ENSSSCT00065070703.1">
    <property type="protein sequence ID" value="ENSSSCP00065030825.1"/>
    <property type="gene ID" value="ENSSSCG00065051631.1"/>
</dbReference>
<dbReference type="Ensembl" id="ENSSSCT00070049144.1">
    <property type="protein sequence ID" value="ENSSSCP00070041503.1"/>
    <property type="gene ID" value="ENSSSCG00070024626.1"/>
</dbReference>
<dbReference type="Ensembl" id="ENSSSCT00070049145.1">
    <property type="protein sequence ID" value="ENSSSCP00070041504.1"/>
    <property type="gene ID" value="ENSSSCG00070024626.1"/>
</dbReference>
<dbReference type="Ensembl" id="ENSSSCT00085022762">
    <property type="protein sequence ID" value="ENSSSCP00085015677"/>
    <property type="gene ID" value="ENSSSCG00085012127"/>
</dbReference>
<dbReference type="Ensembl" id="ENSSSCT00090030918">
    <property type="protein sequence ID" value="ENSSSCP00090019167"/>
    <property type="gene ID" value="ENSSSCG00090017524"/>
</dbReference>
<dbReference type="Ensembl" id="ENSSSCT00105043099">
    <property type="protein sequence ID" value="ENSSSCP00105029998"/>
    <property type="gene ID" value="ENSSSCG00105022642"/>
</dbReference>
<dbReference type="Ensembl" id="ENSSSCT00110040803">
    <property type="protein sequence ID" value="ENSSSCP00110028514"/>
    <property type="gene ID" value="ENSSSCG00110021123"/>
</dbReference>
<dbReference type="Ensembl" id="ENSSSCT00115021655">
    <property type="protein sequence ID" value="ENSSSCP00115020503"/>
    <property type="gene ID" value="ENSSSCG00115012552"/>
</dbReference>
<dbReference type="Ensembl" id="ENSSSCT00130039204">
    <property type="protein sequence ID" value="ENSSSCP00130027608"/>
    <property type="gene ID" value="ENSSSCG00130020202"/>
</dbReference>
<dbReference type="GeneID" id="100151746"/>
<dbReference type="KEGG" id="ssc:100151746"/>
<dbReference type="CTD" id="10211"/>
<dbReference type="VGNC" id="VGNC:88158">
    <property type="gene designation" value="FLOT1"/>
</dbReference>
<dbReference type="eggNOG" id="KOG2668">
    <property type="taxonomic scope" value="Eukaryota"/>
</dbReference>
<dbReference type="GeneTree" id="ENSGT00560000077232"/>
<dbReference type="InParanoid" id="Q767L6"/>
<dbReference type="OMA" id="AFQIQDI"/>
<dbReference type="OrthoDB" id="6080404at2759"/>
<dbReference type="TreeFam" id="TF324879"/>
<dbReference type="Reactome" id="R-SSC-5213460">
    <property type="pathway name" value="RIPK1-mediated regulated necrosis"/>
</dbReference>
<dbReference type="Reactome" id="R-SSC-5675482">
    <property type="pathway name" value="Regulation of necroptotic cell death"/>
</dbReference>
<dbReference type="Reactome" id="R-SSC-8849932">
    <property type="pathway name" value="Synaptic adhesion-like molecules"/>
</dbReference>
<dbReference type="Reactome" id="R-SSC-8980692">
    <property type="pathway name" value="RHOA GTPase cycle"/>
</dbReference>
<dbReference type="Reactome" id="R-SSC-9013026">
    <property type="pathway name" value="RHOB GTPase cycle"/>
</dbReference>
<dbReference type="Reactome" id="R-SSC-9013106">
    <property type="pathway name" value="RHOC GTPase cycle"/>
</dbReference>
<dbReference type="Proteomes" id="UP000008227">
    <property type="component" value="Chromosome 7"/>
</dbReference>
<dbReference type="Proteomes" id="UP000314985">
    <property type="component" value="Chromosome 7"/>
</dbReference>
<dbReference type="Proteomes" id="UP000694570">
    <property type="component" value="Unplaced"/>
</dbReference>
<dbReference type="Proteomes" id="UP000694571">
    <property type="component" value="Unplaced"/>
</dbReference>
<dbReference type="Proteomes" id="UP000694720">
    <property type="component" value="Unplaced"/>
</dbReference>
<dbReference type="Proteomes" id="UP000694722">
    <property type="component" value="Unplaced"/>
</dbReference>
<dbReference type="Proteomes" id="UP000694723">
    <property type="component" value="Unplaced"/>
</dbReference>
<dbReference type="Proteomes" id="UP000694724">
    <property type="component" value="Unplaced"/>
</dbReference>
<dbReference type="Proteomes" id="UP000694725">
    <property type="component" value="Unplaced"/>
</dbReference>
<dbReference type="Proteomes" id="UP000694726">
    <property type="component" value="Unplaced"/>
</dbReference>
<dbReference type="Proteomes" id="UP000694727">
    <property type="component" value="Unplaced"/>
</dbReference>
<dbReference type="Proteomes" id="UP000694728">
    <property type="component" value="Unplaced"/>
</dbReference>
<dbReference type="Bgee" id="ENSSSCG00000022725">
    <property type="expression patterns" value="Expressed in oocyte and 43 other cell types or tissues"/>
</dbReference>
<dbReference type="ExpressionAtlas" id="Q767L6">
    <property type="expression patterns" value="baseline and differential"/>
</dbReference>
<dbReference type="GO" id="GO:0005912">
    <property type="term" value="C:adherens junction"/>
    <property type="evidence" value="ECO:0007669"/>
    <property type="project" value="Ensembl"/>
</dbReference>
<dbReference type="GO" id="GO:0045177">
    <property type="term" value="C:apical part of cell"/>
    <property type="evidence" value="ECO:0000314"/>
    <property type="project" value="AgBase"/>
</dbReference>
<dbReference type="GO" id="GO:0016323">
    <property type="term" value="C:basolateral plasma membrane"/>
    <property type="evidence" value="ECO:0007669"/>
    <property type="project" value="Ensembl"/>
</dbReference>
<dbReference type="GO" id="GO:0044291">
    <property type="term" value="C:cell-cell contact zone"/>
    <property type="evidence" value="ECO:0007669"/>
    <property type="project" value="Ensembl"/>
</dbReference>
<dbReference type="GO" id="GO:0034451">
    <property type="term" value="C:centriolar satellite"/>
    <property type="evidence" value="ECO:0007669"/>
    <property type="project" value="Ensembl"/>
</dbReference>
<dbReference type="GO" id="GO:0008180">
    <property type="term" value="C:COP9 signalosome"/>
    <property type="evidence" value="ECO:0007669"/>
    <property type="project" value="Ensembl"/>
</dbReference>
<dbReference type="GO" id="GO:0030864">
    <property type="term" value="C:cortical actin cytoskeleton"/>
    <property type="evidence" value="ECO:0007669"/>
    <property type="project" value="Ensembl"/>
</dbReference>
<dbReference type="GO" id="GO:0031410">
    <property type="term" value="C:cytoplasmic vesicle"/>
    <property type="evidence" value="ECO:0000318"/>
    <property type="project" value="GO_Central"/>
</dbReference>
<dbReference type="GO" id="GO:0098691">
    <property type="term" value="C:dopaminergic synapse"/>
    <property type="evidence" value="ECO:0007669"/>
    <property type="project" value="Ensembl"/>
</dbReference>
<dbReference type="GO" id="GO:0005769">
    <property type="term" value="C:early endosome"/>
    <property type="evidence" value="ECO:0007669"/>
    <property type="project" value="Ensembl"/>
</dbReference>
<dbReference type="GO" id="GO:0005768">
    <property type="term" value="C:endosome"/>
    <property type="evidence" value="ECO:0000250"/>
    <property type="project" value="UniProtKB"/>
</dbReference>
<dbReference type="GO" id="GO:0009897">
    <property type="term" value="C:external side of plasma membrane"/>
    <property type="evidence" value="ECO:0007669"/>
    <property type="project" value="Ensembl"/>
</dbReference>
<dbReference type="GO" id="GO:0016600">
    <property type="term" value="C:flotillin complex"/>
    <property type="evidence" value="ECO:0000318"/>
    <property type="project" value="GO_Central"/>
</dbReference>
<dbReference type="GO" id="GO:0030027">
    <property type="term" value="C:lamellipodium"/>
    <property type="evidence" value="ECO:0007669"/>
    <property type="project" value="Ensembl"/>
</dbReference>
<dbReference type="GO" id="GO:0042470">
    <property type="term" value="C:melanosome"/>
    <property type="evidence" value="ECO:0007669"/>
    <property type="project" value="UniProtKB-SubCell"/>
</dbReference>
<dbReference type="GO" id="GO:0045121">
    <property type="term" value="C:membrane raft"/>
    <property type="evidence" value="ECO:0000250"/>
    <property type="project" value="UniProtKB"/>
</dbReference>
<dbReference type="GO" id="GO:0005886">
    <property type="term" value="C:plasma membrane"/>
    <property type="evidence" value="ECO:0000318"/>
    <property type="project" value="GO_Central"/>
</dbReference>
<dbReference type="GO" id="GO:0042383">
    <property type="term" value="C:sarcolemma"/>
    <property type="evidence" value="ECO:0007669"/>
    <property type="project" value="Ensembl"/>
</dbReference>
<dbReference type="GO" id="GO:0001931">
    <property type="term" value="C:uropod"/>
    <property type="evidence" value="ECO:0007669"/>
    <property type="project" value="Ensembl"/>
</dbReference>
<dbReference type="GO" id="GO:0002020">
    <property type="term" value="F:protease binding"/>
    <property type="evidence" value="ECO:0000318"/>
    <property type="project" value="GO_Central"/>
</dbReference>
<dbReference type="GO" id="GO:0007409">
    <property type="term" value="P:axonogenesis"/>
    <property type="evidence" value="ECO:0007669"/>
    <property type="project" value="Ensembl"/>
</dbReference>
<dbReference type="GO" id="GO:0071360">
    <property type="term" value="P:cellular response to exogenous dsRNA"/>
    <property type="evidence" value="ECO:0007669"/>
    <property type="project" value="Ensembl"/>
</dbReference>
<dbReference type="GO" id="GO:0033227">
    <property type="term" value="P:dsRNA transport"/>
    <property type="evidence" value="ECO:0007669"/>
    <property type="project" value="Ensembl"/>
</dbReference>
<dbReference type="GO" id="GO:0022617">
    <property type="term" value="P:extracellular matrix disassembly"/>
    <property type="evidence" value="ECO:0007669"/>
    <property type="project" value="Ensembl"/>
</dbReference>
<dbReference type="GO" id="GO:0035556">
    <property type="term" value="P:intracellular signal transduction"/>
    <property type="evidence" value="ECO:0007669"/>
    <property type="project" value="Ensembl"/>
</dbReference>
<dbReference type="GO" id="GO:0044854">
    <property type="term" value="P:plasma membrane raft assembly"/>
    <property type="evidence" value="ECO:0007669"/>
    <property type="project" value="Ensembl"/>
</dbReference>
<dbReference type="GO" id="GO:0043123">
    <property type="term" value="P:positive regulation of canonical NF-kappaB signal transduction"/>
    <property type="evidence" value="ECO:0007669"/>
    <property type="project" value="Ensembl"/>
</dbReference>
<dbReference type="GO" id="GO:1901890">
    <property type="term" value="P:positive regulation of cell junction assembly"/>
    <property type="evidence" value="ECO:0000318"/>
    <property type="project" value="GO_Central"/>
</dbReference>
<dbReference type="GO" id="GO:2000049">
    <property type="term" value="P:positive regulation of cell-cell adhesion mediated by cadherin"/>
    <property type="evidence" value="ECO:0000318"/>
    <property type="project" value="GO_Central"/>
</dbReference>
<dbReference type="GO" id="GO:0045807">
    <property type="term" value="P:positive regulation of endocytosis"/>
    <property type="evidence" value="ECO:0000318"/>
    <property type="project" value="GO_Central"/>
</dbReference>
<dbReference type="GO" id="GO:0034116">
    <property type="term" value="P:positive regulation of heterotypic cell-cell adhesion"/>
    <property type="evidence" value="ECO:0007669"/>
    <property type="project" value="Ensembl"/>
</dbReference>
<dbReference type="GO" id="GO:0032728">
    <property type="term" value="P:positive regulation of interferon-beta production"/>
    <property type="evidence" value="ECO:0007669"/>
    <property type="project" value="Ensembl"/>
</dbReference>
<dbReference type="GO" id="GO:1901741">
    <property type="term" value="P:positive regulation of myoblast fusion"/>
    <property type="evidence" value="ECO:0007669"/>
    <property type="project" value="Ensembl"/>
</dbReference>
<dbReference type="GO" id="GO:0048643">
    <property type="term" value="P:positive regulation of skeletal muscle tissue development"/>
    <property type="evidence" value="ECO:0007669"/>
    <property type="project" value="Ensembl"/>
</dbReference>
<dbReference type="GO" id="GO:0032226">
    <property type="term" value="P:positive regulation of synaptic transmission, dopaminergic"/>
    <property type="evidence" value="ECO:0007669"/>
    <property type="project" value="Ensembl"/>
</dbReference>
<dbReference type="GO" id="GO:0034141">
    <property type="term" value="P:positive regulation of toll-like receptor 3 signaling pathway"/>
    <property type="evidence" value="ECO:0007669"/>
    <property type="project" value="Ensembl"/>
</dbReference>
<dbReference type="GO" id="GO:0072659">
    <property type="term" value="P:protein localization to plasma membrane"/>
    <property type="evidence" value="ECO:0000318"/>
    <property type="project" value="GO_Central"/>
</dbReference>
<dbReference type="GO" id="GO:0050821">
    <property type="term" value="P:protein stabilization"/>
    <property type="evidence" value="ECO:0007669"/>
    <property type="project" value="Ensembl"/>
</dbReference>
<dbReference type="GO" id="GO:0051580">
    <property type="term" value="P:regulation of neurotransmitter uptake"/>
    <property type="evidence" value="ECO:0007669"/>
    <property type="project" value="Ensembl"/>
</dbReference>
<dbReference type="GO" id="GO:0002090">
    <property type="term" value="P:regulation of receptor internalization"/>
    <property type="evidence" value="ECO:0000318"/>
    <property type="project" value="GO_Central"/>
</dbReference>
<dbReference type="GO" id="GO:0035023">
    <property type="term" value="P:regulation of Rho protein signal transduction"/>
    <property type="evidence" value="ECO:0007669"/>
    <property type="project" value="Ensembl"/>
</dbReference>
<dbReference type="GO" id="GO:0034976">
    <property type="term" value="P:response to endoplasmic reticulum stress"/>
    <property type="evidence" value="ECO:0007669"/>
    <property type="project" value="Ensembl"/>
</dbReference>
<dbReference type="CDD" id="cd03399">
    <property type="entry name" value="SPFH_flotillin"/>
    <property type="match status" value="1"/>
</dbReference>
<dbReference type="FunFam" id="3.30.479.30:FF:000003">
    <property type="entry name" value="Flotillin 2"/>
    <property type="match status" value="1"/>
</dbReference>
<dbReference type="Gene3D" id="3.30.479.30">
    <property type="entry name" value="Band 7 domain"/>
    <property type="match status" value="1"/>
</dbReference>
<dbReference type="InterPro" id="IPR001107">
    <property type="entry name" value="Band_7"/>
</dbReference>
<dbReference type="InterPro" id="IPR036013">
    <property type="entry name" value="Band_7/SPFH_dom_sf"/>
</dbReference>
<dbReference type="InterPro" id="IPR031905">
    <property type="entry name" value="Flotillin_C"/>
</dbReference>
<dbReference type="InterPro" id="IPR027705">
    <property type="entry name" value="Flotillin_fam"/>
</dbReference>
<dbReference type="PANTHER" id="PTHR13806:SF46">
    <property type="entry name" value="FLOTILLIN-1-RELATED"/>
    <property type="match status" value="1"/>
</dbReference>
<dbReference type="PANTHER" id="PTHR13806">
    <property type="entry name" value="FLOTILLIN-RELATED"/>
    <property type="match status" value="1"/>
</dbReference>
<dbReference type="Pfam" id="PF01145">
    <property type="entry name" value="Band_7"/>
    <property type="match status" value="1"/>
</dbReference>
<dbReference type="Pfam" id="PF15975">
    <property type="entry name" value="Flot"/>
    <property type="match status" value="1"/>
</dbReference>
<dbReference type="SMART" id="SM00244">
    <property type="entry name" value="PHB"/>
    <property type="match status" value="1"/>
</dbReference>
<dbReference type="SUPFAM" id="SSF117892">
    <property type="entry name" value="Band 7/SPFH domain"/>
    <property type="match status" value="1"/>
</dbReference>
<reference key="1">
    <citation type="journal article" date="2004" name="Immunogenetics">
        <title>Nucleotide sequencing analysis of the swine 433-kb genomic segment located between the non-classical and classical SLA class I gene clusters.</title>
        <authorList>
            <person name="Shigenari A."/>
            <person name="Ando A."/>
            <person name="Renard C."/>
            <person name="Chardon P."/>
            <person name="Shiina T."/>
            <person name="Kulski J.K."/>
            <person name="Yasue H."/>
            <person name="Inoko H."/>
        </authorList>
    </citation>
    <scope>NUCLEOTIDE SEQUENCE [LARGE SCALE GENOMIC DNA]</scope>
    <source>
        <strain>Large white</strain>
    </source>
</reference>